<dbReference type="EMBL" id="AP003251">
    <property type="protein sequence ID" value="BAD81835.1"/>
    <property type="molecule type" value="Genomic_DNA"/>
</dbReference>
<dbReference type="EMBL" id="AP004127">
    <property type="protein sequence ID" value="BAD82664.1"/>
    <property type="molecule type" value="Genomic_DNA"/>
</dbReference>
<dbReference type="EMBL" id="AP008207">
    <property type="protein sequence ID" value="BAF06710.1"/>
    <property type="molecule type" value="Genomic_DNA"/>
</dbReference>
<dbReference type="EMBL" id="AP014957">
    <property type="protein sequence ID" value="BAS75214.1"/>
    <property type="molecule type" value="Genomic_DNA"/>
</dbReference>
<dbReference type="EMBL" id="AK071164">
    <property type="protein sequence ID" value="BAG92348.1"/>
    <property type="molecule type" value="mRNA"/>
</dbReference>
<dbReference type="RefSeq" id="XP_015629876.1">
    <property type="nucleotide sequence ID" value="XM_015774390.1"/>
</dbReference>
<dbReference type="FunCoup" id="Q5N794">
    <property type="interactions" value="200"/>
</dbReference>
<dbReference type="STRING" id="39947.Q5N794"/>
<dbReference type="PaxDb" id="39947-Q5N794"/>
<dbReference type="EnsemblPlants" id="Os01t0847300-01">
    <property type="protein sequence ID" value="Os01t0847300-01"/>
    <property type="gene ID" value="Os01g0847300"/>
</dbReference>
<dbReference type="EnsemblPlants" id="Os01t0847300-02">
    <property type="protein sequence ID" value="Os01t0847300-02"/>
    <property type="gene ID" value="Os01g0847300"/>
</dbReference>
<dbReference type="Gramene" id="Os01t0847300-01">
    <property type="protein sequence ID" value="Os01t0847300-01"/>
    <property type="gene ID" value="Os01g0847300"/>
</dbReference>
<dbReference type="Gramene" id="Os01t0847300-02">
    <property type="protein sequence ID" value="Os01t0847300-02"/>
    <property type="gene ID" value="Os01g0847300"/>
</dbReference>
<dbReference type="KEGG" id="dosa:Os01g0847300"/>
<dbReference type="eggNOG" id="ENOG502RXNM">
    <property type="taxonomic scope" value="Eukaryota"/>
</dbReference>
<dbReference type="HOGENOM" id="CLU_103961_1_0_1"/>
<dbReference type="InParanoid" id="Q5N794"/>
<dbReference type="OMA" id="IYACRRD"/>
<dbReference type="OrthoDB" id="754299at2759"/>
<dbReference type="Proteomes" id="UP000000763">
    <property type="component" value="Chromosome 1"/>
</dbReference>
<dbReference type="Proteomes" id="UP000059680">
    <property type="component" value="Chromosome 1"/>
</dbReference>
<dbReference type="GO" id="GO:0016020">
    <property type="term" value="C:membrane"/>
    <property type="evidence" value="ECO:0000318"/>
    <property type="project" value="GO_Central"/>
</dbReference>
<dbReference type="GO" id="GO:0005886">
    <property type="term" value="C:plasma membrane"/>
    <property type="evidence" value="ECO:0007669"/>
    <property type="project" value="UniProtKB-SubCell"/>
</dbReference>
<dbReference type="InterPro" id="IPR006702">
    <property type="entry name" value="CASP_dom"/>
</dbReference>
<dbReference type="InterPro" id="IPR045009">
    <property type="entry name" value="CASPL-5"/>
</dbReference>
<dbReference type="PANTHER" id="PTHR32021:SF0">
    <property type="entry name" value="CASP-LIKE PROTEIN 5B2"/>
    <property type="match status" value="1"/>
</dbReference>
<dbReference type="PANTHER" id="PTHR32021">
    <property type="entry name" value="CASP-LIKE PROTEIN 5B3"/>
    <property type="match status" value="1"/>
</dbReference>
<dbReference type="Pfam" id="PF04535">
    <property type="entry name" value="CASP_dom"/>
    <property type="match status" value="1"/>
</dbReference>
<sequence length="153" mass="16197">MRELAGSPGTWSGLSLRVGQLVFAAASVCATASALGFAAYTAFCYLIASMGLQALWSLGLACLDCYALKFKKDLHSAVLLSLFVVGDWVTAILSFAASCSAAGVVVLFDRDIYACRNPQLPCGRFELAIACAFLSWAFSATSALVMFWLLASL</sequence>
<keyword id="KW-1003">Cell membrane</keyword>
<keyword id="KW-0472">Membrane</keyword>
<keyword id="KW-1185">Reference proteome</keyword>
<keyword id="KW-0812">Transmembrane</keyword>
<keyword id="KW-1133">Transmembrane helix</keyword>
<protein>
    <recommendedName>
        <fullName>CASP-like protein 5B1</fullName>
        <shortName>OsCASPL5B1</shortName>
    </recommendedName>
</protein>
<gene>
    <name type="ordered locus">Os01g0847300</name>
    <name type="ordered locus">LOC_Os01g62850</name>
    <name type="ORF">P0005H10.13</name>
    <name type="ORF">P0446B05.41</name>
</gene>
<proteinExistence type="evidence at transcript level"/>
<feature type="chain" id="PRO_0000418689" description="CASP-like protein 5B1">
    <location>
        <begin position="1"/>
        <end position="153"/>
    </location>
</feature>
<feature type="topological domain" description="Cytoplasmic" evidence="2">
    <location>
        <begin position="1"/>
        <end position="20"/>
    </location>
</feature>
<feature type="transmembrane region" description="Helical" evidence="2">
    <location>
        <begin position="21"/>
        <end position="41"/>
    </location>
</feature>
<feature type="topological domain" description="Extracellular" evidence="2">
    <location>
        <position position="42"/>
    </location>
</feature>
<feature type="transmembrane region" description="Helical" evidence="2">
    <location>
        <begin position="43"/>
        <end position="63"/>
    </location>
</feature>
<feature type="topological domain" description="Cytoplasmic" evidence="2">
    <location>
        <begin position="64"/>
        <end position="76"/>
    </location>
</feature>
<feature type="transmembrane region" description="Helical" evidence="2">
    <location>
        <begin position="77"/>
        <end position="97"/>
    </location>
</feature>
<feature type="topological domain" description="Extracellular" evidence="2">
    <location>
        <begin position="98"/>
        <end position="128"/>
    </location>
</feature>
<feature type="transmembrane region" description="Helical" evidence="2">
    <location>
        <begin position="129"/>
        <end position="149"/>
    </location>
</feature>
<feature type="topological domain" description="Cytoplasmic" evidence="2">
    <location>
        <begin position="150"/>
        <end position="153"/>
    </location>
</feature>
<comment type="subunit">
    <text evidence="1">Homodimer and heterodimers.</text>
</comment>
<comment type="subcellular location">
    <subcellularLocation>
        <location evidence="1">Cell membrane</location>
        <topology evidence="1">Multi-pass membrane protein</topology>
    </subcellularLocation>
</comment>
<comment type="similarity">
    <text evidence="3">Belongs to the Casparian strip membrane proteins (CASP) family.</text>
</comment>
<accession>Q5N794</accession>
<accession>A0A0P0VAA4</accession>
<organism>
    <name type="scientific">Oryza sativa subsp. japonica</name>
    <name type="common">Rice</name>
    <dbReference type="NCBI Taxonomy" id="39947"/>
    <lineage>
        <taxon>Eukaryota</taxon>
        <taxon>Viridiplantae</taxon>
        <taxon>Streptophyta</taxon>
        <taxon>Embryophyta</taxon>
        <taxon>Tracheophyta</taxon>
        <taxon>Spermatophyta</taxon>
        <taxon>Magnoliopsida</taxon>
        <taxon>Liliopsida</taxon>
        <taxon>Poales</taxon>
        <taxon>Poaceae</taxon>
        <taxon>BOP clade</taxon>
        <taxon>Oryzoideae</taxon>
        <taxon>Oryzeae</taxon>
        <taxon>Oryzinae</taxon>
        <taxon>Oryza</taxon>
        <taxon>Oryza sativa</taxon>
    </lineage>
</organism>
<evidence type="ECO:0000250" key="1"/>
<evidence type="ECO:0000255" key="2"/>
<evidence type="ECO:0000305" key="3"/>
<reference key="1">
    <citation type="journal article" date="2002" name="Nature">
        <title>The genome sequence and structure of rice chromosome 1.</title>
        <authorList>
            <person name="Sasaki T."/>
            <person name="Matsumoto T."/>
            <person name="Yamamoto K."/>
            <person name="Sakata K."/>
            <person name="Baba T."/>
            <person name="Katayose Y."/>
            <person name="Wu J."/>
            <person name="Niimura Y."/>
            <person name="Cheng Z."/>
            <person name="Nagamura Y."/>
            <person name="Antonio B.A."/>
            <person name="Kanamori H."/>
            <person name="Hosokawa S."/>
            <person name="Masukawa M."/>
            <person name="Arikawa K."/>
            <person name="Chiden Y."/>
            <person name="Hayashi M."/>
            <person name="Okamoto M."/>
            <person name="Ando T."/>
            <person name="Aoki H."/>
            <person name="Arita K."/>
            <person name="Hamada M."/>
            <person name="Harada C."/>
            <person name="Hijishita S."/>
            <person name="Honda M."/>
            <person name="Ichikawa Y."/>
            <person name="Idonuma A."/>
            <person name="Iijima M."/>
            <person name="Ikeda M."/>
            <person name="Ikeno M."/>
            <person name="Ito S."/>
            <person name="Ito T."/>
            <person name="Ito Y."/>
            <person name="Ito Y."/>
            <person name="Iwabuchi A."/>
            <person name="Kamiya K."/>
            <person name="Karasawa W."/>
            <person name="Katagiri S."/>
            <person name="Kikuta A."/>
            <person name="Kobayashi N."/>
            <person name="Kono I."/>
            <person name="Machita K."/>
            <person name="Maehara T."/>
            <person name="Mizuno H."/>
            <person name="Mizubayashi T."/>
            <person name="Mukai Y."/>
            <person name="Nagasaki H."/>
            <person name="Nakashima M."/>
            <person name="Nakama Y."/>
            <person name="Nakamichi Y."/>
            <person name="Nakamura M."/>
            <person name="Namiki N."/>
            <person name="Negishi M."/>
            <person name="Ohta I."/>
            <person name="Ono N."/>
            <person name="Saji S."/>
            <person name="Sakai K."/>
            <person name="Shibata M."/>
            <person name="Shimokawa T."/>
            <person name="Shomura A."/>
            <person name="Song J."/>
            <person name="Takazaki Y."/>
            <person name="Terasawa K."/>
            <person name="Tsuji K."/>
            <person name="Waki K."/>
            <person name="Yamagata H."/>
            <person name="Yamane H."/>
            <person name="Yoshiki S."/>
            <person name="Yoshihara R."/>
            <person name="Yukawa K."/>
            <person name="Zhong H."/>
            <person name="Iwama H."/>
            <person name="Endo T."/>
            <person name="Ito H."/>
            <person name="Hahn J.H."/>
            <person name="Kim H.-I."/>
            <person name="Eun M.-Y."/>
            <person name="Yano M."/>
            <person name="Jiang J."/>
            <person name="Gojobori T."/>
        </authorList>
    </citation>
    <scope>NUCLEOTIDE SEQUENCE [LARGE SCALE GENOMIC DNA]</scope>
    <source>
        <strain>cv. Nipponbare</strain>
    </source>
</reference>
<reference key="2">
    <citation type="journal article" date="2005" name="Nature">
        <title>The map-based sequence of the rice genome.</title>
        <authorList>
            <consortium name="International rice genome sequencing project (IRGSP)"/>
        </authorList>
    </citation>
    <scope>NUCLEOTIDE SEQUENCE [LARGE SCALE GENOMIC DNA]</scope>
    <source>
        <strain>cv. Nipponbare</strain>
    </source>
</reference>
<reference key="3">
    <citation type="journal article" date="2008" name="Nucleic Acids Res.">
        <title>The rice annotation project database (RAP-DB): 2008 update.</title>
        <authorList>
            <consortium name="The rice annotation project (RAP)"/>
        </authorList>
    </citation>
    <scope>GENOME REANNOTATION</scope>
    <source>
        <strain>cv. Nipponbare</strain>
    </source>
</reference>
<reference key="4">
    <citation type="journal article" date="2013" name="Rice">
        <title>Improvement of the Oryza sativa Nipponbare reference genome using next generation sequence and optical map data.</title>
        <authorList>
            <person name="Kawahara Y."/>
            <person name="de la Bastide M."/>
            <person name="Hamilton J.P."/>
            <person name="Kanamori H."/>
            <person name="McCombie W.R."/>
            <person name="Ouyang S."/>
            <person name="Schwartz D.C."/>
            <person name="Tanaka T."/>
            <person name="Wu J."/>
            <person name="Zhou S."/>
            <person name="Childs K.L."/>
            <person name="Davidson R.M."/>
            <person name="Lin H."/>
            <person name="Quesada-Ocampo L."/>
            <person name="Vaillancourt B."/>
            <person name="Sakai H."/>
            <person name="Lee S.S."/>
            <person name="Kim J."/>
            <person name="Numa H."/>
            <person name="Itoh T."/>
            <person name="Buell C.R."/>
            <person name="Matsumoto T."/>
        </authorList>
    </citation>
    <scope>GENOME REANNOTATION</scope>
    <source>
        <strain>cv. Nipponbare</strain>
    </source>
</reference>
<reference key="5">
    <citation type="journal article" date="2003" name="Science">
        <title>Collection, mapping, and annotation of over 28,000 cDNA clones from japonica rice.</title>
        <authorList>
            <consortium name="The rice full-length cDNA consortium"/>
        </authorList>
    </citation>
    <scope>NUCLEOTIDE SEQUENCE [LARGE SCALE MRNA]</scope>
    <source>
        <strain>cv. Nipponbare</strain>
    </source>
</reference>
<reference key="6">
    <citation type="journal article" date="2014" name="Plant Physiol.">
        <title>Functional and evolutionary analysis of the CASPARIAN STRIP MEMBRANE DOMAIN PROTEIN family.</title>
        <authorList>
            <person name="Roppolo D."/>
            <person name="Boeckmann B."/>
            <person name="Pfister A."/>
            <person name="Boutet E."/>
            <person name="Rubio M.C."/>
            <person name="Denervaud-Tendon V."/>
            <person name="Vermeer J.E."/>
            <person name="Gheyselinck J."/>
            <person name="Xenarios I."/>
            <person name="Geldner N."/>
        </authorList>
    </citation>
    <scope>GENE FAMILY</scope>
    <scope>NOMENCLATURE</scope>
</reference>
<name>CSPLR_ORYSJ</name>